<gene>
    <name evidence="1" type="primary">rimM</name>
    <name type="ordered locus">gll1505</name>
</gene>
<keyword id="KW-0143">Chaperone</keyword>
<keyword id="KW-0963">Cytoplasm</keyword>
<keyword id="KW-1185">Reference proteome</keyword>
<keyword id="KW-0690">Ribosome biogenesis</keyword>
<keyword id="KW-0698">rRNA processing</keyword>
<dbReference type="EMBL" id="BA000045">
    <property type="protein sequence ID" value="BAC89446.1"/>
    <property type="molecule type" value="Genomic_DNA"/>
</dbReference>
<dbReference type="RefSeq" id="NP_924451.1">
    <property type="nucleotide sequence ID" value="NC_005125.1"/>
</dbReference>
<dbReference type="RefSeq" id="WP_011141504.1">
    <property type="nucleotide sequence ID" value="NC_005125.1"/>
</dbReference>
<dbReference type="SMR" id="Q7NKH3"/>
<dbReference type="FunCoup" id="Q7NKH3">
    <property type="interactions" value="108"/>
</dbReference>
<dbReference type="STRING" id="251221.gene:10758994"/>
<dbReference type="EnsemblBacteria" id="BAC89446">
    <property type="protein sequence ID" value="BAC89446"/>
    <property type="gene ID" value="BAC89446"/>
</dbReference>
<dbReference type="KEGG" id="gvi:gll1505"/>
<dbReference type="PATRIC" id="fig|251221.4.peg.1539"/>
<dbReference type="eggNOG" id="COG0806">
    <property type="taxonomic scope" value="Bacteria"/>
</dbReference>
<dbReference type="HOGENOM" id="CLU_077636_3_1_3"/>
<dbReference type="InParanoid" id="Q7NKH3"/>
<dbReference type="OrthoDB" id="9810331at2"/>
<dbReference type="PhylomeDB" id="Q7NKH3"/>
<dbReference type="Proteomes" id="UP000000557">
    <property type="component" value="Chromosome"/>
</dbReference>
<dbReference type="GO" id="GO:0005829">
    <property type="term" value="C:cytosol"/>
    <property type="evidence" value="ECO:0000318"/>
    <property type="project" value="GO_Central"/>
</dbReference>
<dbReference type="GO" id="GO:0005840">
    <property type="term" value="C:ribosome"/>
    <property type="evidence" value="ECO:0007669"/>
    <property type="project" value="InterPro"/>
</dbReference>
<dbReference type="GO" id="GO:0043022">
    <property type="term" value="F:ribosome binding"/>
    <property type="evidence" value="ECO:0007669"/>
    <property type="project" value="InterPro"/>
</dbReference>
<dbReference type="GO" id="GO:0030490">
    <property type="term" value="P:maturation of SSU-rRNA"/>
    <property type="evidence" value="ECO:0000318"/>
    <property type="project" value="GO_Central"/>
</dbReference>
<dbReference type="Gene3D" id="2.30.30.240">
    <property type="entry name" value="PRC-barrel domain"/>
    <property type="match status" value="1"/>
</dbReference>
<dbReference type="Gene3D" id="2.40.30.60">
    <property type="entry name" value="RimM"/>
    <property type="match status" value="1"/>
</dbReference>
<dbReference type="HAMAP" id="MF_00014">
    <property type="entry name" value="Ribosome_mat_RimM"/>
    <property type="match status" value="1"/>
</dbReference>
<dbReference type="InterPro" id="IPR011033">
    <property type="entry name" value="PRC_barrel-like_sf"/>
</dbReference>
<dbReference type="InterPro" id="IPR056792">
    <property type="entry name" value="PRC_RimM"/>
</dbReference>
<dbReference type="InterPro" id="IPR011961">
    <property type="entry name" value="RimM"/>
</dbReference>
<dbReference type="InterPro" id="IPR002676">
    <property type="entry name" value="RimM_N"/>
</dbReference>
<dbReference type="InterPro" id="IPR036976">
    <property type="entry name" value="RimM_N_sf"/>
</dbReference>
<dbReference type="InterPro" id="IPR009000">
    <property type="entry name" value="Transl_B-barrel_sf"/>
</dbReference>
<dbReference type="NCBIfam" id="TIGR02273">
    <property type="entry name" value="16S_RimM"/>
    <property type="match status" value="1"/>
</dbReference>
<dbReference type="PANTHER" id="PTHR33692">
    <property type="entry name" value="RIBOSOME MATURATION FACTOR RIMM"/>
    <property type="match status" value="1"/>
</dbReference>
<dbReference type="PANTHER" id="PTHR33692:SF1">
    <property type="entry name" value="RIBOSOME MATURATION FACTOR RIMM"/>
    <property type="match status" value="1"/>
</dbReference>
<dbReference type="Pfam" id="PF24986">
    <property type="entry name" value="PRC_RimM"/>
    <property type="match status" value="1"/>
</dbReference>
<dbReference type="Pfam" id="PF01782">
    <property type="entry name" value="RimM"/>
    <property type="match status" value="1"/>
</dbReference>
<dbReference type="SUPFAM" id="SSF50346">
    <property type="entry name" value="PRC-barrel domain"/>
    <property type="match status" value="1"/>
</dbReference>
<dbReference type="SUPFAM" id="SSF50447">
    <property type="entry name" value="Translation proteins"/>
    <property type="match status" value="1"/>
</dbReference>
<proteinExistence type="inferred from homology"/>
<organism>
    <name type="scientific">Gloeobacter violaceus (strain ATCC 29082 / PCC 7421)</name>
    <dbReference type="NCBI Taxonomy" id="251221"/>
    <lineage>
        <taxon>Bacteria</taxon>
        <taxon>Bacillati</taxon>
        <taxon>Cyanobacteriota</taxon>
        <taxon>Cyanophyceae</taxon>
        <taxon>Gloeobacterales</taxon>
        <taxon>Gloeobacteraceae</taxon>
        <taxon>Gloeobacter</taxon>
    </lineage>
</organism>
<sequence>MQQWLEIGKVVAAQGLRGEVRVQPATDFAERLTRPGARLVGRSLDDGRVFRLQSGRAIPGKDLFVCRFEGVEERNAAEKLVGSTLWIGAAERPVLAAGEFWLPDLMGVRVFRQDTGEAIGEVSDMTRAGNDLLVIRLSGGKTVMVPFVHALVPVVDLEAGRIEVVAIPGLLDPEAAEADEA</sequence>
<protein>
    <recommendedName>
        <fullName evidence="1">Ribosome maturation factor RimM</fullName>
    </recommendedName>
</protein>
<evidence type="ECO:0000255" key="1">
    <source>
        <dbReference type="HAMAP-Rule" id="MF_00014"/>
    </source>
</evidence>
<accession>Q7NKH3</accession>
<comment type="function">
    <text evidence="1">An accessory protein needed during the final step in the assembly of 30S ribosomal subunit, possibly for assembly of the head region. Essential for efficient processing of 16S rRNA. May be needed both before and after RbfA during the maturation of 16S rRNA. It has affinity for free ribosomal 30S subunits but not for 70S ribosomes.</text>
</comment>
<comment type="subunit">
    <text evidence="1">Binds ribosomal protein uS19.</text>
</comment>
<comment type="subcellular location">
    <subcellularLocation>
        <location evidence="1">Cytoplasm</location>
    </subcellularLocation>
</comment>
<comment type="domain">
    <text evidence="1">The PRC barrel domain binds ribosomal protein uS19.</text>
</comment>
<comment type="similarity">
    <text evidence="1">Belongs to the RimM family.</text>
</comment>
<feature type="chain" id="PRO_0000163295" description="Ribosome maturation factor RimM">
    <location>
        <begin position="1"/>
        <end position="181"/>
    </location>
</feature>
<feature type="domain" description="PRC barrel" evidence="1">
    <location>
        <begin position="97"/>
        <end position="170"/>
    </location>
</feature>
<reference key="1">
    <citation type="journal article" date="2003" name="DNA Res.">
        <title>Complete genome structure of Gloeobacter violaceus PCC 7421, a cyanobacterium that lacks thylakoids.</title>
        <authorList>
            <person name="Nakamura Y."/>
            <person name="Kaneko T."/>
            <person name="Sato S."/>
            <person name="Mimuro M."/>
            <person name="Miyashita H."/>
            <person name="Tsuchiya T."/>
            <person name="Sasamoto S."/>
            <person name="Watanabe A."/>
            <person name="Kawashima K."/>
            <person name="Kishida Y."/>
            <person name="Kiyokawa C."/>
            <person name="Kohara M."/>
            <person name="Matsumoto M."/>
            <person name="Matsuno A."/>
            <person name="Nakazaki N."/>
            <person name="Shimpo S."/>
            <person name="Takeuchi C."/>
            <person name="Yamada M."/>
            <person name="Tabata S."/>
        </authorList>
    </citation>
    <scope>NUCLEOTIDE SEQUENCE [LARGE SCALE GENOMIC DNA]</scope>
    <source>
        <strain>ATCC 29082 / PCC 7421</strain>
    </source>
</reference>
<name>RIMM_GLOVI</name>